<gene>
    <name evidence="1" type="primary">uvrC</name>
    <name type="ordered locus">Wbm0372</name>
</gene>
<reference key="1">
    <citation type="journal article" date="2005" name="PLoS Biol.">
        <title>The Wolbachia genome of Brugia malayi: endosymbiont evolution within a human pathogenic nematode.</title>
        <authorList>
            <person name="Foster J."/>
            <person name="Ganatra M."/>
            <person name="Kamal I."/>
            <person name="Ware J."/>
            <person name="Makarova K."/>
            <person name="Ivanova N."/>
            <person name="Bhattacharyya A."/>
            <person name="Kapatral V."/>
            <person name="Kumar S."/>
            <person name="Posfai J."/>
            <person name="Vincze T."/>
            <person name="Ingram J."/>
            <person name="Moran L."/>
            <person name="Lapidus A."/>
            <person name="Omelchenko M."/>
            <person name="Kyrpides N."/>
            <person name="Ghedin E."/>
            <person name="Wang S."/>
            <person name="Goltsman E."/>
            <person name="Joukov V."/>
            <person name="Ostrovskaya O."/>
            <person name="Tsukerman K."/>
            <person name="Mazur M."/>
            <person name="Comb D."/>
            <person name="Koonin E."/>
            <person name="Slatko B."/>
        </authorList>
    </citation>
    <scope>NUCLEOTIDE SEQUENCE [LARGE SCALE GENOMIC DNA]</scope>
    <source>
        <strain>TRS</strain>
    </source>
</reference>
<evidence type="ECO:0000255" key="1">
    <source>
        <dbReference type="HAMAP-Rule" id="MF_00203"/>
    </source>
</evidence>
<dbReference type="EMBL" id="AE017321">
    <property type="protein sequence ID" value="AAW70960.1"/>
    <property type="molecule type" value="Genomic_DNA"/>
</dbReference>
<dbReference type="RefSeq" id="WP_011256570.1">
    <property type="nucleotide sequence ID" value="NC_006833.1"/>
</dbReference>
<dbReference type="SMR" id="Q5GSR4"/>
<dbReference type="STRING" id="292805.Wbm0372"/>
<dbReference type="KEGG" id="wbm:Wbm0372"/>
<dbReference type="eggNOG" id="COG0322">
    <property type="taxonomic scope" value="Bacteria"/>
</dbReference>
<dbReference type="HOGENOM" id="CLU_014841_3_0_5"/>
<dbReference type="Proteomes" id="UP000000534">
    <property type="component" value="Chromosome"/>
</dbReference>
<dbReference type="GO" id="GO:0005737">
    <property type="term" value="C:cytoplasm"/>
    <property type="evidence" value="ECO:0007669"/>
    <property type="project" value="UniProtKB-SubCell"/>
</dbReference>
<dbReference type="GO" id="GO:0009380">
    <property type="term" value="C:excinuclease repair complex"/>
    <property type="evidence" value="ECO:0007669"/>
    <property type="project" value="InterPro"/>
</dbReference>
<dbReference type="GO" id="GO:0003677">
    <property type="term" value="F:DNA binding"/>
    <property type="evidence" value="ECO:0007669"/>
    <property type="project" value="UniProtKB-UniRule"/>
</dbReference>
<dbReference type="GO" id="GO:0009381">
    <property type="term" value="F:excinuclease ABC activity"/>
    <property type="evidence" value="ECO:0007669"/>
    <property type="project" value="UniProtKB-UniRule"/>
</dbReference>
<dbReference type="GO" id="GO:0006289">
    <property type="term" value="P:nucleotide-excision repair"/>
    <property type="evidence" value="ECO:0007669"/>
    <property type="project" value="UniProtKB-UniRule"/>
</dbReference>
<dbReference type="GO" id="GO:0009432">
    <property type="term" value="P:SOS response"/>
    <property type="evidence" value="ECO:0007669"/>
    <property type="project" value="UniProtKB-UniRule"/>
</dbReference>
<dbReference type="CDD" id="cd10434">
    <property type="entry name" value="GIY-YIG_UvrC_Cho"/>
    <property type="match status" value="1"/>
</dbReference>
<dbReference type="FunFam" id="3.40.1440.10:FF:000001">
    <property type="entry name" value="UvrABC system protein C"/>
    <property type="match status" value="1"/>
</dbReference>
<dbReference type="Gene3D" id="1.10.150.20">
    <property type="entry name" value="5' to 3' exonuclease, C-terminal subdomain"/>
    <property type="match status" value="1"/>
</dbReference>
<dbReference type="Gene3D" id="3.40.1440.10">
    <property type="entry name" value="GIY-YIG endonuclease"/>
    <property type="match status" value="1"/>
</dbReference>
<dbReference type="Gene3D" id="3.30.420.340">
    <property type="entry name" value="UvrC, RNAse H endonuclease domain"/>
    <property type="match status" value="1"/>
</dbReference>
<dbReference type="HAMAP" id="MF_00203">
    <property type="entry name" value="UvrC"/>
    <property type="match status" value="1"/>
</dbReference>
<dbReference type="InterPro" id="IPR000305">
    <property type="entry name" value="GIY-YIG_endonuc"/>
</dbReference>
<dbReference type="InterPro" id="IPR035901">
    <property type="entry name" value="GIY-YIG_endonuc_sf"/>
</dbReference>
<dbReference type="InterPro" id="IPR047296">
    <property type="entry name" value="GIY-YIG_UvrC_Cho"/>
</dbReference>
<dbReference type="InterPro" id="IPR010994">
    <property type="entry name" value="RuvA_2-like"/>
</dbReference>
<dbReference type="InterPro" id="IPR001943">
    <property type="entry name" value="UVR_dom"/>
</dbReference>
<dbReference type="InterPro" id="IPR036876">
    <property type="entry name" value="UVR_dom_sf"/>
</dbReference>
<dbReference type="InterPro" id="IPR050066">
    <property type="entry name" value="UvrABC_protein_C"/>
</dbReference>
<dbReference type="InterPro" id="IPR004791">
    <property type="entry name" value="UvrC"/>
</dbReference>
<dbReference type="InterPro" id="IPR001162">
    <property type="entry name" value="UvrC_RNase_H_dom"/>
</dbReference>
<dbReference type="InterPro" id="IPR038476">
    <property type="entry name" value="UvrC_RNase_H_dom_sf"/>
</dbReference>
<dbReference type="NCBIfam" id="TIGR00194">
    <property type="entry name" value="uvrC"/>
    <property type="match status" value="1"/>
</dbReference>
<dbReference type="PANTHER" id="PTHR30562:SF1">
    <property type="entry name" value="UVRABC SYSTEM PROTEIN C"/>
    <property type="match status" value="1"/>
</dbReference>
<dbReference type="PANTHER" id="PTHR30562">
    <property type="entry name" value="UVRC/OXIDOREDUCTASE"/>
    <property type="match status" value="1"/>
</dbReference>
<dbReference type="Pfam" id="PF01541">
    <property type="entry name" value="GIY-YIG"/>
    <property type="match status" value="1"/>
</dbReference>
<dbReference type="Pfam" id="PF14520">
    <property type="entry name" value="HHH_5"/>
    <property type="match status" value="1"/>
</dbReference>
<dbReference type="Pfam" id="PF02151">
    <property type="entry name" value="UVR"/>
    <property type="match status" value="1"/>
</dbReference>
<dbReference type="Pfam" id="PF22920">
    <property type="entry name" value="UvrC_RNaseH"/>
    <property type="match status" value="1"/>
</dbReference>
<dbReference type="Pfam" id="PF08459">
    <property type="entry name" value="UvrC_RNaseH_dom"/>
    <property type="match status" value="1"/>
</dbReference>
<dbReference type="SMART" id="SM00465">
    <property type="entry name" value="GIYc"/>
    <property type="match status" value="1"/>
</dbReference>
<dbReference type="SUPFAM" id="SSF46600">
    <property type="entry name" value="C-terminal UvrC-binding domain of UvrB"/>
    <property type="match status" value="1"/>
</dbReference>
<dbReference type="SUPFAM" id="SSF82771">
    <property type="entry name" value="GIY-YIG endonuclease"/>
    <property type="match status" value="1"/>
</dbReference>
<dbReference type="SUPFAM" id="SSF47781">
    <property type="entry name" value="RuvA domain 2-like"/>
    <property type="match status" value="1"/>
</dbReference>
<dbReference type="PROSITE" id="PS50164">
    <property type="entry name" value="GIY_YIG"/>
    <property type="match status" value="1"/>
</dbReference>
<dbReference type="PROSITE" id="PS50151">
    <property type="entry name" value="UVR"/>
    <property type="match status" value="1"/>
</dbReference>
<dbReference type="PROSITE" id="PS50165">
    <property type="entry name" value="UVRC"/>
    <property type="match status" value="1"/>
</dbReference>
<comment type="function">
    <text evidence="1">The UvrABC repair system catalyzes the recognition and processing of DNA lesions. UvrC both incises the 5' and 3' sides of the lesion. The N-terminal half is responsible for the 3' incision and the C-terminal half is responsible for the 5' incision.</text>
</comment>
<comment type="subunit">
    <text evidence="1">Interacts with UvrB in an incision complex.</text>
</comment>
<comment type="subcellular location">
    <subcellularLocation>
        <location evidence="1">Cytoplasm</location>
    </subcellularLocation>
</comment>
<comment type="similarity">
    <text evidence="1">Belongs to the UvrC family.</text>
</comment>
<protein>
    <recommendedName>
        <fullName evidence="1">UvrABC system protein C</fullName>
        <shortName evidence="1">Protein UvrC</shortName>
    </recommendedName>
    <alternativeName>
        <fullName evidence="1">Excinuclease ABC subunit C</fullName>
    </alternativeName>
</protein>
<feature type="chain" id="PRO_0000264976" description="UvrABC system protein C">
    <location>
        <begin position="1"/>
        <end position="606"/>
    </location>
</feature>
<feature type="domain" description="GIY-YIG" evidence="1">
    <location>
        <begin position="19"/>
        <end position="97"/>
    </location>
</feature>
<feature type="domain" description="UVR" evidence="1">
    <location>
        <begin position="207"/>
        <end position="242"/>
    </location>
</feature>
<name>UVRC_WOLTR</name>
<accession>Q5GSR4</accession>
<sequence>MGYVINIQAIKKQIELSPQSCGVYQMIGDKDKVLYVGKAKNLKSRLSNYLRYENLSERTKFMLSQVIKVEVLVTENEIDALLLEARLIKSLKPPYNIIFKDGRSYPYIVISKHNYPRIAQYRGKFKKGEFHYYGPFISVAAVKQTMLSLQKTFLLRVCSDQYFASTKRPCIEYQIKRCSAPCVGKITKDDYCQSVKQTRDTLLGRNEKVKKQLSSTMEKCSKEENYELAAIYRDRLKFLEQIQMQSMDFSFEKDADFFGIARKEDLACIGVLSFRNKDNYGSTPYFVENCSDHPDDEILSTFLIKLYNSANIPPAQIYVSDFVTGKEIIEQALHNVTHKPIKALHAKSKKEHNLLKFVYDNSQRSLEQKLTDYKNNLEKFEELSKIFLLPNIPKRVEVYDNSHTSGNQQVGVMVVAGKEGFLKSEYRKFTIKGEILGDDYEMMREVLTRRFSNNTKDVVPDFLLIDGGPGHISVVQNVLNTLNINVPFACMAKGSYRNAGNERFYMPNREDFTLKNDSKVMLYLQSLRNEAHRFAITSHRKKRDKQFFVSPLSKITSIGDKRKNALMSHFGSVENISKASLAEIQNVARISKELAEVILKHVDNKE</sequence>
<keyword id="KW-0963">Cytoplasm</keyword>
<keyword id="KW-0227">DNA damage</keyword>
<keyword id="KW-0228">DNA excision</keyword>
<keyword id="KW-0234">DNA repair</keyword>
<keyword id="KW-0267">Excision nuclease</keyword>
<keyword id="KW-1185">Reference proteome</keyword>
<keyword id="KW-0742">SOS response</keyword>
<proteinExistence type="inferred from homology"/>
<organism>
    <name type="scientific">Wolbachia sp. subsp. Brugia malayi (strain TRS)</name>
    <dbReference type="NCBI Taxonomy" id="292805"/>
    <lineage>
        <taxon>Bacteria</taxon>
        <taxon>Pseudomonadati</taxon>
        <taxon>Pseudomonadota</taxon>
        <taxon>Alphaproteobacteria</taxon>
        <taxon>Rickettsiales</taxon>
        <taxon>Anaplasmataceae</taxon>
        <taxon>Wolbachieae</taxon>
        <taxon>Wolbachia</taxon>
    </lineage>
</organism>